<accession>A1W4D7</accession>
<dbReference type="EC" id="2.7.-.-" evidence="1"/>
<dbReference type="EMBL" id="CP000539">
    <property type="protein sequence ID" value="ABM41112.1"/>
    <property type="molecule type" value="Genomic_DNA"/>
</dbReference>
<dbReference type="SMR" id="A1W4D7"/>
<dbReference type="STRING" id="232721.Ajs_0870"/>
<dbReference type="KEGG" id="ajs:Ajs_0870"/>
<dbReference type="eggNOG" id="COG0661">
    <property type="taxonomic scope" value="Bacteria"/>
</dbReference>
<dbReference type="HOGENOM" id="CLU_006533_0_0_4"/>
<dbReference type="UniPathway" id="UPA00232"/>
<dbReference type="Proteomes" id="UP000000645">
    <property type="component" value="Chromosome"/>
</dbReference>
<dbReference type="GO" id="GO:0005886">
    <property type="term" value="C:plasma membrane"/>
    <property type="evidence" value="ECO:0007669"/>
    <property type="project" value="UniProtKB-SubCell"/>
</dbReference>
<dbReference type="GO" id="GO:0005524">
    <property type="term" value="F:ATP binding"/>
    <property type="evidence" value="ECO:0007669"/>
    <property type="project" value="UniProtKB-KW"/>
</dbReference>
<dbReference type="GO" id="GO:0004672">
    <property type="term" value="F:protein kinase activity"/>
    <property type="evidence" value="ECO:0007669"/>
    <property type="project" value="UniProtKB-UniRule"/>
</dbReference>
<dbReference type="GO" id="GO:0010795">
    <property type="term" value="P:regulation of ubiquinone biosynthetic process"/>
    <property type="evidence" value="ECO:0007669"/>
    <property type="project" value="UniProtKB-UniRule"/>
</dbReference>
<dbReference type="GO" id="GO:0006744">
    <property type="term" value="P:ubiquinone biosynthetic process"/>
    <property type="evidence" value="ECO:0007669"/>
    <property type="project" value="UniProtKB-UniPathway"/>
</dbReference>
<dbReference type="CDD" id="cd13972">
    <property type="entry name" value="UbiB"/>
    <property type="match status" value="1"/>
</dbReference>
<dbReference type="HAMAP" id="MF_00414">
    <property type="entry name" value="UbiB"/>
    <property type="match status" value="1"/>
</dbReference>
<dbReference type="InterPro" id="IPR004147">
    <property type="entry name" value="ABC1_dom"/>
</dbReference>
<dbReference type="InterPro" id="IPR011009">
    <property type="entry name" value="Kinase-like_dom_sf"/>
</dbReference>
<dbReference type="InterPro" id="IPR010232">
    <property type="entry name" value="UbiB"/>
</dbReference>
<dbReference type="InterPro" id="IPR045308">
    <property type="entry name" value="UbiB_bact"/>
</dbReference>
<dbReference type="InterPro" id="IPR050154">
    <property type="entry name" value="UbiB_kinase"/>
</dbReference>
<dbReference type="NCBIfam" id="NF003404">
    <property type="entry name" value="PRK04750.1"/>
    <property type="match status" value="1"/>
</dbReference>
<dbReference type="NCBIfam" id="TIGR01982">
    <property type="entry name" value="UbiB"/>
    <property type="match status" value="1"/>
</dbReference>
<dbReference type="PANTHER" id="PTHR10566">
    <property type="entry name" value="CHAPERONE-ACTIVITY OF BC1 COMPLEX CABC1 -RELATED"/>
    <property type="match status" value="1"/>
</dbReference>
<dbReference type="PANTHER" id="PTHR10566:SF113">
    <property type="entry name" value="PROTEIN ACTIVITY OF BC1 COMPLEX KINASE 7, CHLOROPLASTIC"/>
    <property type="match status" value="1"/>
</dbReference>
<dbReference type="Pfam" id="PF03109">
    <property type="entry name" value="ABC1"/>
    <property type="match status" value="1"/>
</dbReference>
<dbReference type="SUPFAM" id="SSF56112">
    <property type="entry name" value="Protein kinase-like (PK-like)"/>
    <property type="match status" value="1"/>
</dbReference>
<sequence>MSRFARGITIVWVVLRYGLDELVLSTFRQPWLRAVTRVITFGRKLDAPRGQRLREALESLGPIFVKFGQVLSTRRDLMPPDIADELALLQDRVPPFDPDVAIATIERAFRRPIGEVFVSFDRQPVASASIAQVHFAVIRDRQGHAREVAVKVLRPGMLPVIDKDLALMRMMAGWVESLSADGKRLKPREVVAEFDNYLHDELDLVREAANAAQLRRNMQGLDLVLIPEVFWDFCHAEVLVMERMKGVPINQVDRLRSAGVDIPKLARDGVTIFFTQVFRDGFFHADMHPGNIQVSLAPETFGRYISLDFGIVGTLTEFDKEYLAQNFTAFFRRDYKRVAELHIESGWVPAHTRVNELEAAIRTVCEPYFDRPLKEISLGMVLLRLFQTSRRFQVEIQPQLVLLQKTLLNIEGLGRQLDPDLDLWSTAKPFLEKWMLDQLGPQRLWRELRAEAPHYAKILPDLPRLLHDFLRQRPNDNRVDLQELLATQKRTNRLLQSLIYGGLGFVLGLLVMQLFVRVRIF</sequence>
<proteinExistence type="inferred from homology"/>
<comment type="function">
    <text evidence="1">Is probably a protein kinase regulator of UbiI activity which is involved in aerobic coenzyme Q (ubiquinone) biosynthesis.</text>
</comment>
<comment type="pathway">
    <text>Cofactor biosynthesis; ubiquinone biosynthesis [regulation].</text>
</comment>
<comment type="subcellular location">
    <subcellularLocation>
        <location evidence="1">Cell inner membrane</location>
        <topology evidence="1">Single-pass membrane protein</topology>
    </subcellularLocation>
</comment>
<comment type="similarity">
    <text evidence="1">Belongs to the ABC1 family. UbiB subfamily.</text>
</comment>
<protein>
    <recommendedName>
        <fullName evidence="1">Probable protein kinase UbiB</fullName>
        <ecNumber evidence="1">2.7.-.-</ecNumber>
    </recommendedName>
    <alternativeName>
        <fullName evidence="1">Ubiquinone biosynthesis protein UbiB</fullName>
    </alternativeName>
</protein>
<feature type="chain" id="PRO_1000123886" description="Probable protein kinase UbiB">
    <location>
        <begin position="1"/>
        <end position="521"/>
    </location>
</feature>
<feature type="transmembrane region" description="Helical" evidence="1">
    <location>
        <begin position="496"/>
        <end position="516"/>
    </location>
</feature>
<feature type="domain" description="Protein kinase" evidence="1">
    <location>
        <begin position="119"/>
        <end position="497"/>
    </location>
</feature>
<feature type="active site" description="Proton acceptor" evidence="1">
    <location>
        <position position="286"/>
    </location>
</feature>
<feature type="binding site" evidence="1">
    <location>
        <begin position="125"/>
        <end position="133"/>
    </location>
    <ligand>
        <name>ATP</name>
        <dbReference type="ChEBI" id="CHEBI:30616"/>
    </ligand>
</feature>
<feature type="binding site" evidence="1">
    <location>
        <position position="151"/>
    </location>
    <ligand>
        <name>ATP</name>
        <dbReference type="ChEBI" id="CHEBI:30616"/>
    </ligand>
</feature>
<organism>
    <name type="scientific">Acidovorax sp. (strain JS42)</name>
    <dbReference type="NCBI Taxonomy" id="232721"/>
    <lineage>
        <taxon>Bacteria</taxon>
        <taxon>Pseudomonadati</taxon>
        <taxon>Pseudomonadota</taxon>
        <taxon>Betaproteobacteria</taxon>
        <taxon>Burkholderiales</taxon>
        <taxon>Comamonadaceae</taxon>
        <taxon>Acidovorax</taxon>
    </lineage>
</organism>
<name>UBIB_ACISJ</name>
<gene>
    <name evidence="1" type="primary">ubiB</name>
    <name type="ordered locus">Ajs_0870</name>
</gene>
<evidence type="ECO:0000255" key="1">
    <source>
        <dbReference type="HAMAP-Rule" id="MF_00414"/>
    </source>
</evidence>
<reference key="1">
    <citation type="submission" date="2006-12" db="EMBL/GenBank/DDBJ databases">
        <title>Complete sequence of chromosome 1 of Acidovorax sp. JS42.</title>
        <authorList>
            <person name="Copeland A."/>
            <person name="Lucas S."/>
            <person name="Lapidus A."/>
            <person name="Barry K."/>
            <person name="Detter J.C."/>
            <person name="Glavina del Rio T."/>
            <person name="Dalin E."/>
            <person name="Tice H."/>
            <person name="Pitluck S."/>
            <person name="Chertkov O."/>
            <person name="Brettin T."/>
            <person name="Bruce D."/>
            <person name="Han C."/>
            <person name="Tapia R."/>
            <person name="Gilna P."/>
            <person name="Schmutz J."/>
            <person name="Larimer F."/>
            <person name="Land M."/>
            <person name="Hauser L."/>
            <person name="Kyrpides N."/>
            <person name="Kim E."/>
            <person name="Stahl D."/>
            <person name="Richardson P."/>
        </authorList>
    </citation>
    <scope>NUCLEOTIDE SEQUENCE [LARGE SCALE GENOMIC DNA]</scope>
    <source>
        <strain>JS42</strain>
    </source>
</reference>
<keyword id="KW-0067">ATP-binding</keyword>
<keyword id="KW-0997">Cell inner membrane</keyword>
<keyword id="KW-1003">Cell membrane</keyword>
<keyword id="KW-0418">Kinase</keyword>
<keyword id="KW-0472">Membrane</keyword>
<keyword id="KW-0547">Nucleotide-binding</keyword>
<keyword id="KW-0808">Transferase</keyword>
<keyword id="KW-0812">Transmembrane</keyword>
<keyword id="KW-1133">Transmembrane helix</keyword>
<keyword id="KW-0831">Ubiquinone biosynthesis</keyword>